<reference key="1">
    <citation type="journal article" date="2020" name="Front. Microbiol.">
        <title>Identification of Two Depolymerases From Phage IME205 and Their Antivirulent Functions on K47 Capsule of Klebsiella pneumoniae.</title>
        <authorList>
            <person name="Liu Y."/>
            <person name="Leung S.S.Y."/>
            <person name="Huang Y."/>
            <person name="Guo Y."/>
            <person name="Jiang N."/>
            <person name="Li P."/>
            <person name="Chen J."/>
            <person name="Wang R."/>
            <person name="Bai C."/>
            <person name="Mi Z."/>
            <person name="Gao Z."/>
        </authorList>
    </citation>
    <scope>NUCLEOTIDE SEQUENCE [LARGE SCALE GENOMIC DNA]</scope>
    <scope>FUNCTION</scope>
    <scope>BIOPHYSICOCHEMICAL PROPERTIES</scope>
</reference>
<reference key="2">
    <citation type="journal article" date="2019" name="Front. Microbiol.">
        <title>Modeling the Architecture of Depolymerase-Containing Receptor Binding Proteins in Klebsiella Phages.</title>
        <authorList>
            <person name="Latka A."/>
            <person name="Leiman P.G."/>
            <person name="Drulis-Kawa Z."/>
            <person name="Briers Y."/>
        </authorList>
    </citation>
    <scope>REVIEW</scope>
</reference>
<name>DPOL1_BPKIM</name>
<sequence>MDQDIKTVIQYPVGATEFDIPFDYLSRKFVRVSLVTDENRRLLSNITEYRYVSKTRVKLLVETDGFDRVEIRRLTSASERVVDFSDGSVLRAADLNVSQIQSAHIAEEARDAALMAMPQDDAGNLDARNRRIVRLAPGVEGTDAINKNQLDTTLGDAGGILSDMKDLEGEIHDYIEKFADDTALVRGVAWVYNLGSADGGETVITINKSTRTYAVPYIEVNGSRQEVGYHYSFDLETQQITLATPLKAGDFVMVMTTESQLPVETLLASSVGASSIGTATGETVEERLTRLYGHFVHPETYGAVGDGITDDRVALQRSLDVAYENALNGTGPSTVRWSGDYMVSLNPNSLGVSGELAAGRSALCIRPGVSIEGKGTVRLDPSFTGSQSGAVITNWAGPVDDCSIKDIRIYGGKDVATGTGITGILILDSQRVVISDVKVLNSTAGGIYLRKGATEGLYGCSFSKVSGCTVDNAGYIGIQMERPYDNTVIGNTINRCEDNGIDVFGNVNDATVTGIAQSTLITGNNIRDVLNGVFIESCGNTNITGNYIADFRSSGVIYNRINSAANDNSLTSNVLIGASGASAGVSFKNSVGYCTVASNRIQNSDYGIRCVGGGITGLNILPNTMKNIAKTLLFVEARNNGLVKSRMSTQFYEGAQVGGIPSNTSPRGVPHRFPSRLSYIVDIQPFWATEQGTREDNFERAKGTLASITGWGSKCALYDTIVAGDTVVSLNSSSVAVGEYLEINAEVYKVTSVSATYAVVRKWTGSDYTAGDYAAVIISNPSYIIRRVQWGEQ</sequence>
<protein>
    <recommendedName>
        <fullName evidence="4">Depolymerase 1, capsule K47-specific</fullName>
    </recommendedName>
    <alternativeName>
        <fullName evidence="3">Dpo42</fullName>
    </alternativeName>
    <alternativeName>
        <fullName evidence="4">Gene product 42</fullName>
        <shortName evidence="4">gp42</shortName>
    </alternativeName>
    <alternativeName>
        <fullName evidence="4">Probable tail spike protein</fullName>
    </alternativeName>
</protein>
<proteinExistence type="evidence at protein level"/>
<comment type="function">
    <text evidence="2 5">Functions as a receptor binding protein (RBP) and probably mediates the attachment to the host capsular exopolysaccharides (Probable). Displays a depolymerase activity that specifically degrades some K47-type polysaccharides of Klebsiella pneumoniae capsule, which allows the phage to reach the host cell membrane and bind the entry receptor (PubMed:32117192).</text>
</comment>
<comment type="biophysicochemical properties">
    <phDependence>
        <text evidence="2">Optimum pH is 5-8.</text>
    </phDependence>
    <temperatureDependence>
        <text evidence="2">Optimum temperature is 20-70 degrees Celsius.</text>
    </temperatureDependence>
</comment>
<comment type="subunit">
    <text evidence="1">Interacts (via N-terminus) with depolymerase 2 (via N-terminus); this interaction probably gives rise to a branched tailspike.</text>
</comment>
<comment type="subcellular location">
    <subcellularLocation>
        <location evidence="1">Virion</location>
    </subcellularLocation>
    <text evidence="1">Tail appendage. Depolymerase 1 is connected to the phage tail via an N-terminal anchor domain, while depolymerase 2 is attached to depolymerase 1.</text>
</comment>
<comment type="domain">
    <text evidence="1 4">The N-terminus anchors the RBP to the virion (By similarity). The central part and C-terminus probably binds and degrades the host exopolysaccharides (Probable).</text>
</comment>
<comment type="similarity">
    <text evidence="4">In the N-terminal section; belongs to the Teseptimavirus fiber family.</text>
</comment>
<comment type="similarity">
    <text evidence="4">In the C-terminal section; belongs to the K47-specific depolymerase family.</text>
</comment>
<dbReference type="EMBL" id="KU183006">
    <property type="protein sequence ID" value="ALT58497.1"/>
    <property type="molecule type" value="Genomic_DNA"/>
</dbReference>
<dbReference type="RefSeq" id="YP_009785899.1">
    <property type="nucleotide sequence ID" value="NC_047761.1"/>
</dbReference>
<dbReference type="SMR" id="A0A0U3DL17"/>
<dbReference type="GeneID" id="54975964"/>
<dbReference type="Proteomes" id="UP000221941">
    <property type="component" value="Genome"/>
</dbReference>
<dbReference type="GO" id="GO:0098015">
    <property type="term" value="C:virus tail"/>
    <property type="evidence" value="ECO:0007669"/>
    <property type="project" value="UniProtKB-KW"/>
</dbReference>
<dbReference type="GO" id="GO:0098671">
    <property type="term" value="P:adhesion receptor-mediated virion attachment to host cell"/>
    <property type="evidence" value="ECO:0007669"/>
    <property type="project" value="UniProtKB-KW"/>
</dbReference>
<dbReference type="GO" id="GO:0098994">
    <property type="term" value="P:symbiont entry into host cell via disruption of host cell envelope"/>
    <property type="evidence" value="ECO:0007669"/>
    <property type="project" value="UniProtKB-KW"/>
</dbReference>
<dbReference type="GO" id="GO:0098996">
    <property type="term" value="P:symbiont entry into host cell via disruption of host cell glycocalyx"/>
    <property type="evidence" value="ECO:0007669"/>
    <property type="project" value="UniProtKB-KW"/>
</dbReference>
<dbReference type="Gene3D" id="2.160.20.10">
    <property type="entry name" value="Single-stranded right-handed beta-helix, Pectin lyase-like"/>
    <property type="match status" value="1"/>
</dbReference>
<dbReference type="InterPro" id="IPR039448">
    <property type="entry name" value="Beta_helix"/>
</dbReference>
<dbReference type="InterPro" id="IPR022441">
    <property type="entry name" value="Para_beta_helix_rpt-2"/>
</dbReference>
<dbReference type="InterPro" id="IPR006626">
    <property type="entry name" value="PbH1"/>
</dbReference>
<dbReference type="InterPro" id="IPR012334">
    <property type="entry name" value="Pectin_lyas_fold"/>
</dbReference>
<dbReference type="InterPro" id="IPR011050">
    <property type="entry name" value="Pectin_lyase_fold/virulence"/>
</dbReference>
<dbReference type="InterPro" id="IPR005604">
    <property type="entry name" value="Phage_T7_tail_fibre-like_N"/>
</dbReference>
<dbReference type="NCBIfam" id="TIGR03804">
    <property type="entry name" value="para_beta_helix"/>
    <property type="match status" value="1"/>
</dbReference>
<dbReference type="Pfam" id="PF13229">
    <property type="entry name" value="Beta_helix"/>
    <property type="match status" value="1"/>
</dbReference>
<dbReference type="Pfam" id="PF03906">
    <property type="entry name" value="Phage_T7_tail"/>
    <property type="match status" value="1"/>
</dbReference>
<dbReference type="SMART" id="SM00710">
    <property type="entry name" value="PbH1"/>
    <property type="match status" value="8"/>
</dbReference>
<dbReference type="SUPFAM" id="SSF51126">
    <property type="entry name" value="Pectin lyase-like"/>
    <property type="match status" value="1"/>
</dbReference>
<keyword id="KW-1238">Degradation of host capsule during virus entry</keyword>
<keyword id="KW-1235">Degradation of host cell envelope components during virus entry</keyword>
<keyword id="KW-0945">Host-virus interaction</keyword>
<keyword id="KW-1185">Reference proteome</keyword>
<keyword id="KW-1233">Viral attachment to host adhesion receptor</keyword>
<keyword id="KW-1161">Viral attachment to host cell</keyword>
<keyword id="KW-1227">Viral tail protein</keyword>
<keyword id="KW-0946">Virion</keyword>
<keyword id="KW-1160">Virus entry into host cell</keyword>
<evidence type="ECO:0000250" key="1">
    <source>
        <dbReference type="UniProtKB" id="D1L2X0"/>
    </source>
</evidence>
<evidence type="ECO:0000269" key="2">
    <source>
    </source>
</evidence>
<evidence type="ECO:0000303" key="3">
    <source>
    </source>
</evidence>
<evidence type="ECO:0000305" key="4"/>
<evidence type="ECO:0000305" key="5">
    <source>
    </source>
</evidence>
<feature type="chain" id="PRO_0000458717" description="Depolymerase 1, capsule K47-specific">
    <location>
        <begin position="1"/>
        <end position="793"/>
    </location>
</feature>
<organismHost>
    <name type="scientific">Klebsiella pneumoniae</name>
    <dbReference type="NCBI Taxonomy" id="573"/>
</organismHost>
<organism>
    <name type="scientific">Klebsiella phage vB_KpnP_IME205</name>
    <name type="common">Bacteriophage vB_KpnP_IME205</name>
    <dbReference type="NCBI Taxonomy" id="1770232"/>
    <lineage>
        <taxon>Viruses</taxon>
        <taxon>Duplodnaviria</taxon>
        <taxon>Heunggongvirae</taxon>
        <taxon>Uroviricota</taxon>
        <taxon>Caudoviricetes</taxon>
        <taxon>Autographiviridae</taxon>
        <taxon>Studiervirinae</taxon>
        <taxon>Przondovirus</taxon>
        <taxon>Przondovirus IME205</taxon>
    </lineage>
</organism>
<accession>A0A0U3DL17</accession>